<name>MURD_CLOB8</name>
<protein>
    <recommendedName>
        <fullName evidence="1">UDP-N-acetylmuramoylalanine--D-glutamate ligase</fullName>
        <ecNumber evidence="1">6.3.2.9</ecNumber>
    </recommendedName>
    <alternativeName>
        <fullName evidence="1">D-glutamic acid-adding enzyme</fullName>
    </alternativeName>
    <alternativeName>
        <fullName evidence="1">UDP-N-acetylmuramoyl-L-alanyl-D-glutamate synthetase</fullName>
    </alternativeName>
</protein>
<reference key="1">
    <citation type="submission" date="2007-06" db="EMBL/GenBank/DDBJ databases">
        <title>Complete sequence of Clostridium beijerinckii NCIMB 8052.</title>
        <authorList>
            <consortium name="US DOE Joint Genome Institute"/>
            <person name="Copeland A."/>
            <person name="Lucas S."/>
            <person name="Lapidus A."/>
            <person name="Barry K."/>
            <person name="Detter J.C."/>
            <person name="Glavina del Rio T."/>
            <person name="Hammon N."/>
            <person name="Israni S."/>
            <person name="Dalin E."/>
            <person name="Tice H."/>
            <person name="Pitluck S."/>
            <person name="Sims D."/>
            <person name="Brettin T."/>
            <person name="Bruce D."/>
            <person name="Tapia R."/>
            <person name="Brainard J."/>
            <person name="Schmutz J."/>
            <person name="Larimer F."/>
            <person name="Land M."/>
            <person name="Hauser L."/>
            <person name="Kyrpides N."/>
            <person name="Mikhailova N."/>
            <person name="Bennet G."/>
            <person name="Cann I."/>
            <person name="Chen J.-S."/>
            <person name="Contreras A.L."/>
            <person name="Jones D."/>
            <person name="Kashket E."/>
            <person name="Mitchell W."/>
            <person name="Stoddard S."/>
            <person name="Schwarz W."/>
            <person name="Qureshi N."/>
            <person name="Young M."/>
            <person name="Shi Z."/>
            <person name="Ezeji T."/>
            <person name="White B."/>
            <person name="Blaschek H."/>
            <person name="Richardson P."/>
        </authorList>
    </citation>
    <scope>NUCLEOTIDE SEQUENCE [LARGE SCALE GENOMIC DNA]</scope>
    <source>
        <strain>ATCC 51743 / NCIMB 8052</strain>
    </source>
</reference>
<gene>
    <name evidence="1" type="primary">murD</name>
    <name type="ordered locus">Cbei_0107</name>
</gene>
<dbReference type="EC" id="6.3.2.9" evidence="1"/>
<dbReference type="EMBL" id="CP000721">
    <property type="protein sequence ID" value="ABR32297.1"/>
    <property type="molecule type" value="Genomic_DNA"/>
</dbReference>
<dbReference type="RefSeq" id="WP_011967471.1">
    <property type="nucleotide sequence ID" value="NC_009617.1"/>
</dbReference>
<dbReference type="SMR" id="A6LPL7"/>
<dbReference type="KEGG" id="cbe:Cbei_0107"/>
<dbReference type="eggNOG" id="COG0771">
    <property type="taxonomic scope" value="Bacteria"/>
</dbReference>
<dbReference type="HOGENOM" id="CLU_032540_0_1_9"/>
<dbReference type="UniPathway" id="UPA00219"/>
<dbReference type="Proteomes" id="UP000000565">
    <property type="component" value="Chromosome"/>
</dbReference>
<dbReference type="GO" id="GO:0005737">
    <property type="term" value="C:cytoplasm"/>
    <property type="evidence" value="ECO:0007669"/>
    <property type="project" value="UniProtKB-SubCell"/>
</dbReference>
<dbReference type="GO" id="GO:0005524">
    <property type="term" value="F:ATP binding"/>
    <property type="evidence" value="ECO:0007669"/>
    <property type="project" value="UniProtKB-UniRule"/>
</dbReference>
<dbReference type="GO" id="GO:0008764">
    <property type="term" value="F:UDP-N-acetylmuramoylalanine-D-glutamate ligase activity"/>
    <property type="evidence" value="ECO:0007669"/>
    <property type="project" value="UniProtKB-UniRule"/>
</dbReference>
<dbReference type="GO" id="GO:0051301">
    <property type="term" value="P:cell division"/>
    <property type="evidence" value="ECO:0007669"/>
    <property type="project" value="UniProtKB-KW"/>
</dbReference>
<dbReference type="GO" id="GO:0071555">
    <property type="term" value="P:cell wall organization"/>
    <property type="evidence" value="ECO:0007669"/>
    <property type="project" value="UniProtKB-KW"/>
</dbReference>
<dbReference type="GO" id="GO:0009252">
    <property type="term" value="P:peptidoglycan biosynthetic process"/>
    <property type="evidence" value="ECO:0007669"/>
    <property type="project" value="UniProtKB-UniRule"/>
</dbReference>
<dbReference type="GO" id="GO:0008360">
    <property type="term" value="P:regulation of cell shape"/>
    <property type="evidence" value="ECO:0007669"/>
    <property type="project" value="UniProtKB-KW"/>
</dbReference>
<dbReference type="Gene3D" id="3.90.190.20">
    <property type="entry name" value="Mur ligase, C-terminal domain"/>
    <property type="match status" value="1"/>
</dbReference>
<dbReference type="Gene3D" id="3.40.1190.10">
    <property type="entry name" value="Mur-like, catalytic domain"/>
    <property type="match status" value="1"/>
</dbReference>
<dbReference type="Gene3D" id="3.40.50.720">
    <property type="entry name" value="NAD(P)-binding Rossmann-like Domain"/>
    <property type="match status" value="1"/>
</dbReference>
<dbReference type="HAMAP" id="MF_00639">
    <property type="entry name" value="MurD"/>
    <property type="match status" value="1"/>
</dbReference>
<dbReference type="InterPro" id="IPR036565">
    <property type="entry name" value="Mur-like_cat_sf"/>
</dbReference>
<dbReference type="InterPro" id="IPR004101">
    <property type="entry name" value="Mur_ligase_C"/>
</dbReference>
<dbReference type="InterPro" id="IPR036615">
    <property type="entry name" value="Mur_ligase_C_dom_sf"/>
</dbReference>
<dbReference type="InterPro" id="IPR013221">
    <property type="entry name" value="Mur_ligase_cen"/>
</dbReference>
<dbReference type="InterPro" id="IPR005762">
    <property type="entry name" value="MurD"/>
</dbReference>
<dbReference type="NCBIfam" id="TIGR01087">
    <property type="entry name" value="murD"/>
    <property type="match status" value="1"/>
</dbReference>
<dbReference type="PANTHER" id="PTHR43692">
    <property type="entry name" value="UDP-N-ACETYLMURAMOYLALANINE--D-GLUTAMATE LIGASE"/>
    <property type="match status" value="1"/>
</dbReference>
<dbReference type="PANTHER" id="PTHR43692:SF1">
    <property type="entry name" value="UDP-N-ACETYLMURAMOYLALANINE--D-GLUTAMATE LIGASE"/>
    <property type="match status" value="1"/>
</dbReference>
<dbReference type="Pfam" id="PF02875">
    <property type="entry name" value="Mur_ligase_C"/>
    <property type="match status" value="1"/>
</dbReference>
<dbReference type="Pfam" id="PF08245">
    <property type="entry name" value="Mur_ligase_M"/>
    <property type="match status" value="1"/>
</dbReference>
<dbReference type="SUPFAM" id="SSF51984">
    <property type="entry name" value="MurCD N-terminal domain"/>
    <property type="match status" value="1"/>
</dbReference>
<dbReference type="SUPFAM" id="SSF53623">
    <property type="entry name" value="MurD-like peptide ligases, catalytic domain"/>
    <property type="match status" value="1"/>
</dbReference>
<dbReference type="SUPFAM" id="SSF53244">
    <property type="entry name" value="MurD-like peptide ligases, peptide-binding domain"/>
    <property type="match status" value="1"/>
</dbReference>
<accession>A6LPL7</accession>
<sequence length="458" mass="51305">MKKDFNEFKEFIVGKKVGVVGIGVSNIPLINFLIDLGAAVTAFDKKNLEELGDVADGFNKKGVKLELGEKYLDNLKGFDVIFKTPSMRIDSEALVRARKEGAYVTSEMEEFVRYTRGKVYGITGSDGKTTTTTIISKLLEGQGYKTWVGGNIGTPLFSEIENIHDEDKVVLELSSFQLMTMTQEIDVAVCTNLSPNHLDMHKSMQEYIDAKKNIFIYQNSNGLLVVNRENEITHGFIKEAKGNVKEFSSKRELIDGAYYKNGILYLEDKEVCKKDDIVIKGMHNVENYLAAFLATKDDVSVEVMKKVAETFAGVEHRCELVREIDGVKYYNDSIASSPTRTLAGLRAFDEKVIVIAGGYDKNIPFEPLAYEGYPYIKELILMGATKHKIKDVFDNLENEKGIKININMVESLEEAVRLAESIANQGDIVTLSPACASFDMYPNFMIRGNKFKEIVKSL</sequence>
<feature type="chain" id="PRO_1000082678" description="UDP-N-acetylmuramoylalanine--D-glutamate ligase">
    <location>
        <begin position="1"/>
        <end position="458"/>
    </location>
</feature>
<feature type="binding site" evidence="1">
    <location>
        <begin position="124"/>
        <end position="130"/>
    </location>
    <ligand>
        <name>ATP</name>
        <dbReference type="ChEBI" id="CHEBI:30616"/>
    </ligand>
</feature>
<comment type="function">
    <text evidence="1">Cell wall formation. Catalyzes the addition of glutamate to the nucleotide precursor UDP-N-acetylmuramoyl-L-alanine (UMA).</text>
</comment>
<comment type="catalytic activity">
    <reaction evidence="1">
        <text>UDP-N-acetyl-alpha-D-muramoyl-L-alanine + D-glutamate + ATP = UDP-N-acetyl-alpha-D-muramoyl-L-alanyl-D-glutamate + ADP + phosphate + H(+)</text>
        <dbReference type="Rhea" id="RHEA:16429"/>
        <dbReference type="ChEBI" id="CHEBI:15378"/>
        <dbReference type="ChEBI" id="CHEBI:29986"/>
        <dbReference type="ChEBI" id="CHEBI:30616"/>
        <dbReference type="ChEBI" id="CHEBI:43474"/>
        <dbReference type="ChEBI" id="CHEBI:83898"/>
        <dbReference type="ChEBI" id="CHEBI:83900"/>
        <dbReference type="ChEBI" id="CHEBI:456216"/>
        <dbReference type="EC" id="6.3.2.9"/>
    </reaction>
</comment>
<comment type="pathway">
    <text evidence="1">Cell wall biogenesis; peptidoglycan biosynthesis.</text>
</comment>
<comment type="subcellular location">
    <subcellularLocation>
        <location evidence="1">Cytoplasm</location>
    </subcellularLocation>
</comment>
<comment type="similarity">
    <text evidence="1">Belongs to the MurCDEF family.</text>
</comment>
<evidence type="ECO:0000255" key="1">
    <source>
        <dbReference type="HAMAP-Rule" id="MF_00639"/>
    </source>
</evidence>
<organism>
    <name type="scientific">Clostridium beijerinckii (strain ATCC 51743 / NCIMB 8052)</name>
    <name type="common">Clostridium acetobutylicum</name>
    <dbReference type="NCBI Taxonomy" id="290402"/>
    <lineage>
        <taxon>Bacteria</taxon>
        <taxon>Bacillati</taxon>
        <taxon>Bacillota</taxon>
        <taxon>Clostridia</taxon>
        <taxon>Eubacteriales</taxon>
        <taxon>Clostridiaceae</taxon>
        <taxon>Clostridium</taxon>
    </lineage>
</organism>
<proteinExistence type="inferred from homology"/>
<keyword id="KW-0067">ATP-binding</keyword>
<keyword id="KW-0131">Cell cycle</keyword>
<keyword id="KW-0132">Cell division</keyword>
<keyword id="KW-0133">Cell shape</keyword>
<keyword id="KW-0961">Cell wall biogenesis/degradation</keyword>
<keyword id="KW-0963">Cytoplasm</keyword>
<keyword id="KW-0436">Ligase</keyword>
<keyword id="KW-0547">Nucleotide-binding</keyword>
<keyword id="KW-0573">Peptidoglycan synthesis</keyword>